<accession>P27879</accession>
<feature type="chain" id="PRO_0000125978" description="18.1 kDa class I heat shock protein">
    <location>
        <begin position="1" status="less than"/>
        <end position="143"/>
    </location>
</feature>
<feature type="domain" description="sHSP" evidence="1">
    <location>
        <begin position="29"/>
        <end position="143"/>
    </location>
</feature>
<feature type="non-terminal residue">
    <location>
        <position position="1"/>
    </location>
</feature>
<reference key="1">
    <citation type="journal article" date="1991" name="Plant Mol. Biol.">
        <title>Alfalfa heat shock genes are differentially expressed during somatic embryogenesis.</title>
        <authorList>
            <person name="Gyorgyey J."/>
            <person name="Gartner A."/>
            <person name="Nemeth K."/>
            <person name="Magyar Z."/>
            <person name="Hirt H."/>
            <person name="Heberle-Bors E."/>
            <person name="Dudits D."/>
        </authorList>
    </citation>
    <scope>NUCLEOTIDE SEQUENCE [MRNA]</scope>
    <source>
        <strain>cv. RA3</strain>
    </source>
</reference>
<comment type="subunit">
    <text>Forms oligomeric structures.</text>
</comment>
<comment type="subcellular location">
    <subcellularLocation>
        <location>Cytoplasm</location>
    </subcellularLocation>
</comment>
<comment type="developmental stage">
    <text>Expressed in the early stages of embryogenesis under normal in vitro culture conditions.</text>
</comment>
<comment type="induction">
    <text>By stress.</text>
</comment>
<comment type="similarity">
    <text evidence="1">Belongs to the small heat shock protein (HSP20) family.</text>
</comment>
<keyword id="KW-0963">Cytoplasm</keyword>
<keyword id="KW-0346">Stress response</keyword>
<protein>
    <recommendedName>
        <fullName>18.1 kDa class I heat shock protein</fullName>
    </recommendedName>
</protein>
<dbReference type="EMBL" id="X58710">
    <property type="protein sequence ID" value="CAA41546.1"/>
    <property type="molecule type" value="mRNA"/>
</dbReference>
<dbReference type="PIR" id="S16248">
    <property type="entry name" value="S16248"/>
</dbReference>
<dbReference type="SMR" id="P27879"/>
<dbReference type="GO" id="GO:0005737">
    <property type="term" value="C:cytoplasm"/>
    <property type="evidence" value="ECO:0007669"/>
    <property type="project" value="UniProtKB-SubCell"/>
</dbReference>
<dbReference type="CDD" id="cd06472">
    <property type="entry name" value="ACD_ScHsp26_like"/>
    <property type="match status" value="1"/>
</dbReference>
<dbReference type="FunFam" id="2.60.40.790:FF:000009">
    <property type="entry name" value="17.6 kDa class I heat shock protein-like"/>
    <property type="match status" value="1"/>
</dbReference>
<dbReference type="Gene3D" id="2.60.40.790">
    <property type="match status" value="1"/>
</dbReference>
<dbReference type="InterPro" id="IPR002068">
    <property type="entry name" value="A-crystallin/Hsp20_dom"/>
</dbReference>
<dbReference type="InterPro" id="IPR008978">
    <property type="entry name" value="HSP20-like_chaperone"/>
</dbReference>
<dbReference type="InterPro" id="IPR031107">
    <property type="entry name" value="Small_HSP"/>
</dbReference>
<dbReference type="PANTHER" id="PTHR11527">
    <property type="entry name" value="HEAT-SHOCK PROTEIN 20 FAMILY MEMBER"/>
    <property type="match status" value="1"/>
</dbReference>
<dbReference type="Pfam" id="PF00011">
    <property type="entry name" value="HSP20"/>
    <property type="match status" value="1"/>
</dbReference>
<dbReference type="SUPFAM" id="SSF49764">
    <property type="entry name" value="HSP20-like chaperones"/>
    <property type="match status" value="1"/>
</dbReference>
<dbReference type="PROSITE" id="PS01031">
    <property type="entry name" value="SHSP"/>
    <property type="match status" value="1"/>
</dbReference>
<evidence type="ECO:0000255" key="1">
    <source>
        <dbReference type="PROSITE-ProRule" id="PRU00285"/>
    </source>
</evidence>
<sequence length="143" mass="16468">DPFSLDVWDPFKDFPFTNSALSASSFPQENSAFVSTRIDWKETPEAHVFKADLPGLKKEEVKVEIEDDRVLQISGERNVEKEDKNDQWHRVERSSGKFMRRFRLPENAKMDQVKAAMENGVLTVTVPKEEIKKPEVKSIEISS</sequence>
<organism>
    <name type="scientific">Medicago sativa</name>
    <name type="common">Alfalfa</name>
    <dbReference type="NCBI Taxonomy" id="3879"/>
    <lineage>
        <taxon>Eukaryota</taxon>
        <taxon>Viridiplantae</taxon>
        <taxon>Streptophyta</taxon>
        <taxon>Embryophyta</taxon>
        <taxon>Tracheophyta</taxon>
        <taxon>Spermatophyta</taxon>
        <taxon>Magnoliopsida</taxon>
        <taxon>eudicotyledons</taxon>
        <taxon>Gunneridae</taxon>
        <taxon>Pentapetalae</taxon>
        <taxon>rosids</taxon>
        <taxon>fabids</taxon>
        <taxon>Fabales</taxon>
        <taxon>Fabaceae</taxon>
        <taxon>Papilionoideae</taxon>
        <taxon>50 kb inversion clade</taxon>
        <taxon>NPAAA clade</taxon>
        <taxon>Hologalegina</taxon>
        <taxon>IRL clade</taxon>
        <taxon>Trifolieae</taxon>
        <taxon>Medicago</taxon>
    </lineage>
</organism>
<gene>
    <name type="primary">HSP18.1</name>
</gene>
<proteinExistence type="evidence at transcript level"/>
<name>HSP11_MEDSA</name>